<organism>
    <name type="scientific">Arabidopsis thaliana</name>
    <name type="common">Mouse-ear cress</name>
    <dbReference type="NCBI Taxonomy" id="3702"/>
    <lineage>
        <taxon>Eukaryota</taxon>
        <taxon>Viridiplantae</taxon>
        <taxon>Streptophyta</taxon>
        <taxon>Embryophyta</taxon>
        <taxon>Tracheophyta</taxon>
        <taxon>Spermatophyta</taxon>
        <taxon>Magnoliopsida</taxon>
        <taxon>eudicotyledons</taxon>
        <taxon>Gunneridae</taxon>
        <taxon>Pentapetalae</taxon>
        <taxon>rosids</taxon>
        <taxon>malvids</taxon>
        <taxon>Brassicales</taxon>
        <taxon>Brassicaceae</taxon>
        <taxon>Camelineae</taxon>
        <taxon>Arabidopsis</taxon>
    </lineage>
</organism>
<feature type="chain" id="PRO_0000074282" description="Dof zinc finger protein DOF3.6">
    <location>
        <begin position="1"/>
        <end position="323"/>
    </location>
</feature>
<feature type="zinc finger region" description="Dof-type" evidence="1">
    <location>
        <begin position="76"/>
        <end position="130"/>
    </location>
</feature>
<feature type="region of interest" description="Disordered" evidence="2">
    <location>
        <begin position="121"/>
        <end position="160"/>
    </location>
</feature>
<feature type="region of interest" description="Disordered" evidence="2">
    <location>
        <begin position="304"/>
        <end position="323"/>
    </location>
</feature>
<feature type="compositionally biased region" description="Basic residues" evidence="2">
    <location>
        <begin position="126"/>
        <end position="135"/>
    </location>
</feature>
<feature type="compositionally biased region" description="Low complexity" evidence="2">
    <location>
        <begin position="136"/>
        <end position="159"/>
    </location>
</feature>
<feature type="binding site" evidence="1">
    <location>
        <position position="78"/>
    </location>
    <ligand>
        <name>Zn(2+)</name>
        <dbReference type="ChEBI" id="CHEBI:29105"/>
    </ligand>
</feature>
<feature type="binding site" evidence="1">
    <location>
        <position position="81"/>
    </location>
    <ligand>
        <name>Zn(2+)</name>
        <dbReference type="ChEBI" id="CHEBI:29105"/>
    </ligand>
</feature>
<feature type="binding site" evidence="1">
    <location>
        <position position="103"/>
    </location>
    <ligand>
        <name>Zn(2+)</name>
        <dbReference type="ChEBI" id="CHEBI:29105"/>
    </ligand>
</feature>
<feature type="binding site" evidence="1">
    <location>
        <position position="106"/>
    </location>
    <ligand>
        <name>Zn(2+)</name>
        <dbReference type="ChEBI" id="CHEBI:29105"/>
    </ligand>
</feature>
<protein>
    <recommendedName>
        <fullName>Dof zinc finger protein DOF3.6</fullName>
        <shortName>AtDOF3.6</shortName>
    </recommendedName>
    <alternativeName>
        <fullName>OBF-binding protein 3</fullName>
    </alternativeName>
</protein>
<accession>Q9M2U1</accession>
<accession>Q56YC1</accession>
<accession>Q9XGU4</accession>
<comment type="function">
    <text evidence="4">Transcription factor that binds specifically to a 5'-AA[AG]G-3' consensus core sequence. Enhances the DNA binding of OBF transcription factors to OCS elements.</text>
</comment>
<comment type="subunit">
    <text evidence="3">Interacts with OBF4.</text>
</comment>
<comment type="subcellular location">
    <subcellularLocation>
        <location evidence="5">Nucleus</location>
    </subcellularLocation>
</comment>
<comment type="alternative products">
    <event type="alternative splicing"/>
    <isoform>
        <id>Q9M2U1-1</id>
        <name>1</name>
        <sequence type="displayed"/>
    </isoform>
    <text>A number of isoforms are produced. According to EST sequences.</text>
</comment>
<comment type="tissue specificity">
    <text evidence="3">Predominantly expressed in roots.</text>
</comment>
<comment type="induction">
    <text evidence="3 4">By auxin and salicylic acid (SA). Repressed by jasmonic acid (JA).</text>
</comment>
<comment type="sequence caution" evidence="5">
    <conflict type="erroneous initiation">
        <sequence resource="EMBL-CDS" id="AAD38988"/>
    </conflict>
</comment>
<comment type="sequence caution" evidence="5">
    <conflict type="erroneous gene model prediction">
        <sequence resource="EMBL-CDS" id="CAB75895"/>
    </conflict>
</comment>
<reference key="1">
    <citation type="journal article" date="2000" name="Nature">
        <title>Sequence and analysis of chromosome 3 of the plant Arabidopsis thaliana.</title>
        <authorList>
            <person name="Salanoubat M."/>
            <person name="Lemcke K."/>
            <person name="Rieger M."/>
            <person name="Ansorge W."/>
            <person name="Unseld M."/>
            <person name="Fartmann B."/>
            <person name="Valle G."/>
            <person name="Bloecker H."/>
            <person name="Perez-Alonso M."/>
            <person name="Obermaier B."/>
            <person name="Delseny M."/>
            <person name="Boutry M."/>
            <person name="Grivell L.A."/>
            <person name="Mache R."/>
            <person name="Puigdomenech P."/>
            <person name="De Simone V."/>
            <person name="Choisne N."/>
            <person name="Artiguenave F."/>
            <person name="Robert C."/>
            <person name="Brottier P."/>
            <person name="Wincker P."/>
            <person name="Cattolico L."/>
            <person name="Weissenbach J."/>
            <person name="Saurin W."/>
            <person name="Quetier F."/>
            <person name="Schaefer M."/>
            <person name="Mueller-Auer S."/>
            <person name="Gabel C."/>
            <person name="Fuchs M."/>
            <person name="Benes V."/>
            <person name="Wurmbach E."/>
            <person name="Drzonek H."/>
            <person name="Erfle H."/>
            <person name="Jordan N."/>
            <person name="Bangert S."/>
            <person name="Wiedelmann R."/>
            <person name="Kranz H."/>
            <person name="Voss H."/>
            <person name="Holland R."/>
            <person name="Brandt P."/>
            <person name="Nyakatura G."/>
            <person name="Vezzi A."/>
            <person name="D'Angelo M."/>
            <person name="Pallavicini A."/>
            <person name="Toppo S."/>
            <person name="Simionati B."/>
            <person name="Conrad A."/>
            <person name="Hornischer K."/>
            <person name="Kauer G."/>
            <person name="Loehnert T.-H."/>
            <person name="Nordsiek G."/>
            <person name="Reichelt J."/>
            <person name="Scharfe M."/>
            <person name="Schoen O."/>
            <person name="Bargues M."/>
            <person name="Terol J."/>
            <person name="Climent J."/>
            <person name="Navarro P."/>
            <person name="Collado C."/>
            <person name="Perez-Perez A."/>
            <person name="Ottenwaelder B."/>
            <person name="Duchemin D."/>
            <person name="Cooke R."/>
            <person name="Laudie M."/>
            <person name="Berger-Llauro C."/>
            <person name="Purnelle B."/>
            <person name="Masuy D."/>
            <person name="de Haan M."/>
            <person name="Maarse A.C."/>
            <person name="Alcaraz J.-P."/>
            <person name="Cottet A."/>
            <person name="Casacuberta E."/>
            <person name="Monfort A."/>
            <person name="Argiriou A."/>
            <person name="Flores M."/>
            <person name="Liguori R."/>
            <person name="Vitale D."/>
            <person name="Mannhaupt G."/>
            <person name="Haase D."/>
            <person name="Schoof H."/>
            <person name="Rudd S."/>
            <person name="Zaccaria P."/>
            <person name="Mewes H.-W."/>
            <person name="Mayer K.F.X."/>
            <person name="Kaul S."/>
            <person name="Town C.D."/>
            <person name="Koo H.L."/>
            <person name="Tallon L.J."/>
            <person name="Jenkins J."/>
            <person name="Rooney T."/>
            <person name="Rizzo M."/>
            <person name="Walts A."/>
            <person name="Utterback T."/>
            <person name="Fujii C.Y."/>
            <person name="Shea T.P."/>
            <person name="Creasy T.H."/>
            <person name="Haas B."/>
            <person name="Maiti R."/>
            <person name="Wu D."/>
            <person name="Peterson J."/>
            <person name="Van Aken S."/>
            <person name="Pai G."/>
            <person name="Militscher J."/>
            <person name="Sellers P."/>
            <person name="Gill J.E."/>
            <person name="Feldblyum T.V."/>
            <person name="Preuss D."/>
            <person name="Lin X."/>
            <person name="Nierman W.C."/>
            <person name="Salzberg S.L."/>
            <person name="White O."/>
            <person name="Venter J.C."/>
            <person name="Fraser C.M."/>
            <person name="Kaneko T."/>
            <person name="Nakamura Y."/>
            <person name="Sato S."/>
            <person name="Kato T."/>
            <person name="Asamizu E."/>
            <person name="Sasamoto S."/>
            <person name="Kimura T."/>
            <person name="Idesawa K."/>
            <person name="Kawashima K."/>
            <person name="Kishida Y."/>
            <person name="Kiyokawa C."/>
            <person name="Kohara M."/>
            <person name="Matsumoto M."/>
            <person name="Matsuno A."/>
            <person name="Muraki A."/>
            <person name="Nakayama S."/>
            <person name="Nakazaki N."/>
            <person name="Shinpo S."/>
            <person name="Takeuchi C."/>
            <person name="Wada T."/>
            <person name="Watanabe A."/>
            <person name="Yamada M."/>
            <person name="Yasuda M."/>
            <person name="Tabata S."/>
        </authorList>
    </citation>
    <scope>NUCLEOTIDE SEQUENCE [LARGE SCALE GENOMIC DNA]</scope>
    <source>
        <strain>cv. Columbia</strain>
    </source>
</reference>
<reference key="2">
    <citation type="journal article" date="2017" name="Plant J.">
        <title>Araport11: a complete reannotation of the Arabidopsis thaliana reference genome.</title>
        <authorList>
            <person name="Cheng C.Y."/>
            <person name="Krishnakumar V."/>
            <person name="Chan A.P."/>
            <person name="Thibaud-Nissen F."/>
            <person name="Schobel S."/>
            <person name="Town C.D."/>
        </authorList>
    </citation>
    <scope>GENOME REANNOTATION</scope>
    <source>
        <strain>cv. Columbia</strain>
    </source>
</reference>
<reference key="3">
    <citation type="submission" date="2005-03" db="EMBL/GenBank/DDBJ databases">
        <title>Large-scale analysis of RIKEN Arabidopsis full-length (RAFL) cDNAs.</title>
        <authorList>
            <person name="Totoki Y."/>
            <person name="Seki M."/>
            <person name="Ishida J."/>
            <person name="Nakajima M."/>
            <person name="Enju A."/>
            <person name="Kamiya A."/>
            <person name="Narusaka M."/>
            <person name="Shin-i T."/>
            <person name="Nakagawa M."/>
            <person name="Sakamoto N."/>
            <person name="Oishi K."/>
            <person name="Kohara Y."/>
            <person name="Kobayashi M."/>
            <person name="Toyoda A."/>
            <person name="Sakaki Y."/>
            <person name="Sakurai T."/>
            <person name="Iida K."/>
            <person name="Akiyama K."/>
            <person name="Satou M."/>
            <person name="Toyoda T."/>
            <person name="Konagaya A."/>
            <person name="Carninci P."/>
            <person name="Kawai J."/>
            <person name="Hayashizaki Y."/>
            <person name="Shinozaki K."/>
        </authorList>
    </citation>
    <scope>NUCLEOTIDE SEQUENCE [LARGE SCALE MRNA]</scope>
    <source>
        <strain>cv. Columbia</strain>
    </source>
</reference>
<reference key="4">
    <citation type="submission" date="2008-06" db="EMBL/GenBank/DDBJ databases">
        <title>Arabidopsis ORF clones.</title>
        <authorList>
            <person name="De Los Reyes C."/>
            <person name="Quan R."/>
            <person name="Chen H."/>
            <person name="Bautista V.R."/>
            <person name="Kim C.J."/>
            <person name="Ecker J.R."/>
        </authorList>
    </citation>
    <scope>NUCLEOTIDE SEQUENCE [LARGE SCALE MRNA]</scope>
    <source>
        <strain>cv. Columbia</strain>
    </source>
</reference>
<reference key="5">
    <citation type="journal article" date="2000" name="Plant J.">
        <title>Characterization of salicylic acid-responsive, Arabidopsis Dof domain proteins: overexpression of OBP3 leads to growth defects.</title>
        <authorList>
            <person name="Kang H.-G."/>
            <person name="Singh K.B."/>
        </authorList>
    </citation>
    <scope>NUCLEOTIDE SEQUENCE [MRNA] OF 20-323</scope>
    <scope>TISSUE SPECIFICITY</scope>
    <scope>INDUCTION</scope>
    <scope>INTERACTION WITH OBF4</scope>
    <source>
        <strain>cv. Columbia</strain>
    </source>
</reference>
<reference key="6">
    <citation type="journal article" date="2002" name="Trends Plant Sci.">
        <title>The Dof family of plant transcription factors.</title>
        <authorList>
            <person name="Yanagisawa S."/>
        </authorList>
    </citation>
    <scope>GENE FAMILY</scope>
    <scope>NOMENCLATURE</scope>
</reference>
<reference key="7">
    <citation type="journal article" date="2003" name="Plant J.">
        <title>Target genes for OBP3, a Dof transcription factor, include novel basic helix-loop-helix domain proteins inducible by salicylic acid.</title>
        <authorList>
            <person name="Kang H.-G."/>
            <person name="Foley R.C."/>
            <person name="Onate-Sanchez L."/>
            <person name="Lin C."/>
            <person name="Singh K.B."/>
        </authorList>
    </citation>
    <scope>FUNCTION</scope>
    <scope>INDUCTION BY JASMONIC ACID</scope>
</reference>
<name>DOF36_ARATH</name>
<dbReference type="EMBL" id="AL132975">
    <property type="protein sequence ID" value="CAB75895.1"/>
    <property type="status" value="ALT_SEQ"/>
    <property type="molecule type" value="Genomic_DNA"/>
</dbReference>
<dbReference type="EMBL" id="CP002686">
    <property type="protein sequence ID" value="AEE79373.1"/>
    <property type="molecule type" value="Genomic_DNA"/>
</dbReference>
<dbReference type="EMBL" id="AK221402">
    <property type="protein sequence ID" value="BAD94355.1"/>
    <property type="molecule type" value="mRNA"/>
</dbReference>
<dbReference type="EMBL" id="BT033028">
    <property type="protein sequence ID" value="ACE73109.1"/>
    <property type="molecule type" value="mRNA"/>
</dbReference>
<dbReference type="EMBL" id="AF155818">
    <property type="protein sequence ID" value="AAD38988.1"/>
    <property type="status" value="ALT_INIT"/>
    <property type="molecule type" value="mRNA"/>
</dbReference>
<dbReference type="PIR" id="T47676">
    <property type="entry name" value="T47676"/>
</dbReference>
<dbReference type="PIR" id="T50640">
    <property type="entry name" value="T50640"/>
</dbReference>
<dbReference type="RefSeq" id="NP_191097.3">
    <molecule id="Q9M2U1-1"/>
    <property type="nucleotide sequence ID" value="NM_115395.6"/>
</dbReference>
<dbReference type="BioGRID" id="10019">
    <property type="interactions" value="1"/>
</dbReference>
<dbReference type="FunCoup" id="Q9M2U1">
    <property type="interactions" value="516"/>
</dbReference>
<dbReference type="IntAct" id="Q9M2U1">
    <property type="interactions" value="1"/>
</dbReference>
<dbReference type="STRING" id="3702.Q9M2U1"/>
<dbReference type="EnsemblPlants" id="AT3G55370.1">
    <molecule id="Q9M2U1-1"/>
    <property type="protein sequence ID" value="AT3G55370.1"/>
    <property type="gene ID" value="AT3G55370"/>
</dbReference>
<dbReference type="GeneID" id="824703"/>
<dbReference type="Gramene" id="AT3G55370.1">
    <molecule id="Q9M2U1-1"/>
    <property type="protein sequence ID" value="AT3G55370.1"/>
    <property type="gene ID" value="AT3G55370"/>
</dbReference>
<dbReference type="KEGG" id="ath:AT3G55370"/>
<dbReference type="Araport" id="AT3G55370"/>
<dbReference type="TAIR" id="AT3G55370">
    <property type="gene designation" value="OBP3"/>
</dbReference>
<dbReference type="HOGENOM" id="CLU_036438_0_3_1"/>
<dbReference type="InParanoid" id="Q9M2U1"/>
<dbReference type="OMA" id="HHGGLMA"/>
<dbReference type="PhylomeDB" id="Q9M2U1"/>
<dbReference type="PRO" id="PR:Q9M2U1"/>
<dbReference type="Proteomes" id="UP000006548">
    <property type="component" value="Chromosome 3"/>
</dbReference>
<dbReference type="ExpressionAtlas" id="Q9M2U1">
    <property type="expression patterns" value="baseline and differential"/>
</dbReference>
<dbReference type="GO" id="GO:0005634">
    <property type="term" value="C:nucleus"/>
    <property type="evidence" value="ECO:0007669"/>
    <property type="project" value="UniProtKB-SubCell"/>
</dbReference>
<dbReference type="GO" id="GO:0003677">
    <property type="term" value="F:DNA binding"/>
    <property type="evidence" value="ECO:0007669"/>
    <property type="project" value="UniProtKB-KW"/>
</dbReference>
<dbReference type="GO" id="GO:0003700">
    <property type="term" value="F:DNA-binding transcription factor activity"/>
    <property type="evidence" value="ECO:0007669"/>
    <property type="project" value="InterPro"/>
</dbReference>
<dbReference type="GO" id="GO:0008270">
    <property type="term" value="F:zinc ion binding"/>
    <property type="evidence" value="ECO:0007669"/>
    <property type="project" value="UniProtKB-KW"/>
</dbReference>
<dbReference type="InterPro" id="IPR045174">
    <property type="entry name" value="Dof"/>
</dbReference>
<dbReference type="InterPro" id="IPR003851">
    <property type="entry name" value="Znf_Dof"/>
</dbReference>
<dbReference type="PANTHER" id="PTHR31992">
    <property type="entry name" value="DOF ZINC FINGER PROTEIN DOF1.4-RELATED"/>
    <property type="match status" value="1"/>
</dbReference>
<dbReference type="PANTHER" id="PTHR31992:SF193">
    <property type="entry name" value="DOF ZINC FINGER PROTEIN DOF3.6"/>
    <property type="match status" value="1"/>
</dbReference>
<dbReference type="Pfam" id="PF02701">
    <property type="entry name" value="Zn_ribbon_Dof"/>
    <property type="match status" value="1"/>
</dbReference>
<dbReference type="PROSITE" id="PS01361">
    <property type="entry name" value="ZF_DOF_1"/>
    <property type="match status" value="1"/>
</dbReference>
<dbReference type="PROSITE" id="PS50884">
    <property type="entry name" value="ZF_DOF_2"/>
    <property type="match status" value="1"/>
</dbReference>
<keyword id="KW-0025">Alternative splicing</keyword>
<keyword id="KW-0238">DNA-binding</keyword>
<keyword id="KW-0479">Metal-binding</keyword>
<keyword id="KW-0539">Nucleus</keyword>
<keyword id="KW-1185">Reference proteome</keyword>
<keyword id="KW-0804">Transcription</keyword>
<keyword id="KW-0805">Transcription regulation</keyword>
<keyword id="KW-0862">Zinc</keyword>
<keyword id="KW-0863">Zinc-finger</keyword>
<evidence type="ECO:0000255" key="1">
    <source>
        <dbReference type="PROSITE-ProRule" id="PRU00071"/>
    </source>
</evidence>
<evidence type="ECO:0000256" key="2">
    <source>
        <dbReference type="SAM" id="MobiDB-lite"/>
    </source>
</evidence>
<evidence type="ECO:0000269" key="3">
    <source>
    </source>
</evidence>
<evidence type="ECO:0000269" key="4">
    <source>
    </source>
</evidence>
<evidence type="ECO:0000305" key="5"/>
<sequence>MVFSSLPVNQFDSQNWQQQGNQHQLECVTTDQNPNNYLRQLSSPPTSQVAGSSQARVNSMVERARIAKVPLPEAALNCPRCDSTNTKFCYFNNYSLTQPRHFCKTCRRYWTRGGSLRNVPVGGGFRRNKRSKSRSKSTVVVSTDNTTSTSSLTSRPSYSNPSKFHSYGQIPEFNSNLPILPPLQSLGDYNSSNTGLDFGGTQISNMISGMSSSGGILDAWRIPPSQQAQQFPFLINTTGLVQSSNALYPLLEGGVSATQTRNVKAEENDQDRGRDGDGVNNLSRNFLGNININSGRNEEYTSWGGNSSWTGFTSNNSTGHLSF</sequence>
<proteinExistence type="evidence at protein level"/>
<gene>
    <name type="primary">DOF3.6</name>
    <name type="synonym">OBP3</name>
    <name type="ordered locus">At3g55370</name>
    <name type="ORF">T22E16.30</name>
</gene>